<sequence>MEHIEILKAIFLGIVEGITEWLPISSTGHMILVNEFIRLNVTEAFKQVFLVVIQLGAILSVVLLYFNKLIPFSLNGGFYLKKDVVSMWIKIIISCIPATIVGIPFDDKIDALFYNYQTVSITLISFGILFIMIENHNKGKHPRITSISEITYTTAVLIGIFQLIAAVFPGTSRSGATIVGALLIGVSRTVAAEYTFFLAIPVMFGASLLKLFKFGLHFTSTEITILFIGMLSAFIVSILAIKFLMIYIKRHDFKAFGWYRIILGCAVLVYFLIV</sequence>
<reference key="1">
    <citation type="journal article" date="2001" name="J. Bacteriol.">
        <title>Genome sequence and comparative analysis of the solvent-producing bacterium Clostridium acetobutylicum.</title>
        <authorList>
            <person name="Noelling J."/>
            <person name="Breton G."/>
            <person name="Omelchenko M.V."/>
            <person name="Makarova K.S."/>
            <person name="Zeng Q."/>
            <person name="Gibson R."/>
            <person name="Lee H.M."/>
            <person name="Dubois J."/>
            <person name="Qiu D."/>
            <person name="Hitti J."/>
            <person name="Wolf Y.I."/>
            <person name="Tatusov R.L."/>
            <person name="Sabathe F."/>
            <person name="Doucette-Stamm L.A."/>
            <person name="Soucaille P."/>
            <person name="Daly M.J."/>
            <person name="Bennett G.N."/>
            <person name="Koonin E.V."/>
            <person name="Smith D.R."/>
        </authorList>
    </citation>
    <scope>NUCLEOTIDE SEQUENCE [LARGE SCALE GENOMIC DNA]</scope>
    <source>
        <strain>ATCC 824 / DSM 792 / JCM 1419 / IAM 19013 / LMG 5710 / NBRC 13948 / NRRL B-527 / VKM B-1787 / 2291 / W</strain>
    </source>
</reference>
<feature type="chain" id="PRO_0000151134" description="Undecaprenyl-diphosphatase 1">
    <location>
        <begin position="1"/>
        <end position="274"/>
    </location>
</feature>
<feature type="transmembrane region" description="Helical" evidence="1">
    <location>
        <begin position="47"/>
        <end position="67"/>
    </location>
</feature>
<feature type="transmembrane region" description="Helical" evidence="1">
    <location>
        <begin position="85"/>
        <end position="105"/>
    </location>
</feature>
<feature type="transmembrane region" description="Helical" evidence="1">
    <location>
        <begin position="113"/>
        <end position="133"/>
    </location>
</feature>
<feature type="transmembrane region" description="Helical" evidence="1">
    <location>
        <begin position="150"/>
        <end position="170"/>
    </location>
</feature>
<feature type="transmembrane region" description="Helical" evidence="1">
    <location>
        <begin position="196"/>
        <end position="216"/>
    </location>
</feature>
<feature type="transmembrane region" description="Helical" evidence="1">
    <location>
        <begin position="225"/>
        <end position="245"/>
    </location>
</feature>
<feature type="transmembrane region" description="Helical" evidence="1">
    <location>
        <begin position="253"/>
        <end position="273"/>
    </location>
</feature>
<gene>
    <name evidence="1" type="primary">uppP1</name>
    <name type="synonym">bacA1</name>
    <name type="synonym">upk1</name>
    <name type="ordered locus">CA_C0501</name>
</gene>
<protein>
    <recommendedName>
        <fullName evidence="1">Undecaprenyl-diphosphatase 1</fullName>
        <ecNumber evidence="1">3.6.1.27</ecNumber>
    </recommendedName>
    <alternativeName>
        <fullName evidence="1">Bacitracin resistance protein 1</fullName>
    </alternativeName>
    <alternativeName>
        <fullName evidence="1">Undecaprenyl pyrophosphate phosphatase 1</fullName>
    </alternativeName>
</protein>
<proteinExistence type="inferred from homology"/>
<dbReference type="EC" id="3.6.1.27" evidence="1"/>
<dbReference type="EMBL" id="AE001437">
    <property type="protein sequence ID" value="AAK78481.1"/>
    <property type="molecule type" value="Genomic_DNA"/>
</dbReference>
<dbReference type="PIR" id="F96961">
    <property type="entry name" value="F96961"/>
</dbReference>
<dbReference type="RefSeq" id="NP_347141.1">
    <property type="nucleotide sequence ID" value="NC_003030.1"/>
</dbReference>
<dbReference type="RefSeq" id="WP_010963823.1">
    <property type="nucleotide sequence ID" value="NC_003030.1"/>
</dbReference>
<dbReference type="SMR" id="Q97LQ3"/>
<dbReference type="STRING" id="272562.CA_C0501"/>
<dbReference type="KEGG" id="cac:CA_C0501"/>
<dbReference type="PATRIC" id="fig|272562.8.peg.700"/>
<dbReference type="eggNOG" id="COG1968">
    <property type="taxonomic scope" value="Bacteria"/>
</dbReference>
<dbReference type="HOGENOM" id="CLU_060296_2_0_9"/>
<dbReference type="OrthoDB" id="9808289at2"/>
<dbReference type="Proteomes" id="UP000000814">
    <property type="component" value="Chromosome"/>
</dbReference>
<dbReference type="GO" id="GO:0005886">
    <property type="term" value="C:plasma membrane"/>
    <property type="evidence" value="ECO:0007669"/>
    <property type="project" value="UniProtKB-SubCell"/>
</dbReference>
<dbReference type="GO" id="GO:0050380">
    <property type="term" value="F:undecaprenyl-diphosphatase activity"/>
    <property type="evidence" value="ECO:0007669"/>
    <property type="project" value="UniProtKB-UniRule"/>
</dbReference>
<dbReference type="GO" id="GO:0071555">
    <property type="term" value="P:cell wall organization"/>
    <property type="evidence" value="ECO:0007669"/>
    <property type="project" value="UniProtKB-KW"/>
</dbReference>
<dbReference type="GO" id="GO:0009252">
    <property type="term" value="P:peptidoglycan biosynthetic process"/>
    <property type="evidence" value="ECO:0007669"/>
    <property type="project" value="UniProtKB-KW"/>
</dbReference>
<dbReference type="GO" id="GO:0008360">
    <property type="term" value="P:regulation of cell shape"/>
    <property type="evidence" value="ECO:0007669"/>
    <property type="project" value="UniProtKB-KW"/>
</dbReference>
<dbReference type="GO" id="GO:0046677">
    <property type="term" value="P:response to antibiotic"/>
    <property type="evidence" value="ECO:0007669"/>
    <property type="project" value="UniProtKB-UniRule"/>
</dbReference>
<dbReference type="HAMAP" id="MF_01006">
    <property type="entry name" value="Undec_diphosphatase"/>
    <property type="match status" value="1"/>
</dbReference>
<dbReference type="InterPro" id="IPR003824">
    <property type="entry name" value="UppP"/>
</dbReference>
<dbReference type="NCBIfam" id="NF001390">
    <property type="entry name" value="PRK00281.1-4"/>
    <property type="match status" value="1"/>
</dbReference>
<dbReference type="NCBIfam" id="NF001391">
    <property type="entry name" value="PRK00281.1-5"/>
    <property type="match status" value="1"/>
</dbReference>
<dbReference type="NCBIfam" id="TIGR00753">
    <property type="entry name" value="undec_PP_bacA"/>
    <property type="match status" value="1"/>
</dbReference>
<dbReference type="PANTHER" id="PTHR30622">
    <property type="entry name" value="UNDECAPRENYL-DIPHOSPHATASE"/>
    <property type="match status" value="1"/>
</dbReference>
<dbReference type="PANTHER" id="PTHR30622:SF3">
    <property type="entry name" value="UNDECAPRENYL-DIPHOSPHATASE"/>
    <property type="match status" value="1"/>
</dbReference>
<dbReference type="Pfam" id="PF02673">
    <property type="entry name" value="BacA"/>
    <property type="match status" value="1"/>
</dbReference>
<accession>Q97LQ3</accession>
<name>UPPP1_CLOAB</name>
<keyword id="KW-0046">Antibiotic resistance</keyword>
<keyword id="KW-1003">Cell membrane</keyword>
<keyword id="KW-0133">Cell shape</keyword>
<keyword id="KW-0961">Cell wall biogenesis/degradation</keyword>
<keyword id="KW-0378">Hydrolase</keyword>
<keyword id="KW-0472">Membrane</keyword>
<keyword id="KW-0573">Peptidoglycan synthesis</keyword>
<keyword id="KW-1185">Reference proteome</keyword>
<keyword id="KW-0812">Transmembrane</keyword>
<keyword id="KW-1133">Transmembrane helix</keyword>
<organism>
    <name type="scientific">Clostridium acetobutylicum (strain ATCC 824 / DSM 792 / JCM 1419 / IAM 19013 / LMG 5710 / NBRC 13948 / NRRL B-527 / VKM B-1787 / 2291 / W)</name>
    <dbReference type="NCBI Taxonomy" id="272562"/>
    <lineage>
        <taxon>Bacteria</taxon>
        <taxon>Bacillati</taxon>
        <taxon>Bacillota</taxon>
        <taxon>Clostridia</taxon>
        <taxon>Eubacteriales</taxon>
        <taxon>Clostridiaceae</taxon>
        <taxon>Clostridium</taxon>
    </lineage>
</organism>
<comment type="function">
    <text evidence="1">Catalyzes the dephosphorylation of undecaprenyl diphosphate (UPP). Confers resistance to bacitracin.</text>
</comment>
<comment type="catalytic activity">
    <reaction evidence="1">
        <text>di-trans,octa-cis-undecaprenyl diphosphate + H2O = di-trans,octa-cis-undecaprenyl phosphate + phosphate + H(+)</text>
        <dbReference type="Rhea" id="RHEA:28094"/>
        <dbReference type="ChEBI" id="CHEBI:15377"/>
        <dbReference type="ChEBI" id="CHEBI:15378"/>
        <dbReference type="ChEBI" id="CHEBI:43474"/>
        <dbReference type="ChEBI" id="CHEBI:58405"/>
        <dbReference type="ChEBI" id="CHEBI:60392"/>
        <dbReference type="EC" id="3.6.1.27"/>
    </reaction>
</comment>
<comment type="subcellular location">
    <subcellularLocation>
        <location evidence="1">Cell membrane</location>
        <topology evidence="1">Multi-pass membrane protein</topology>
    </subcellularLocation>
</comment>
<comment type="miscellaneous">
    <text>Bacitracin is thought to be involved in the inhibition of peptidoglycan synthesis by sequestering undecaprenyl diphosphate, thereby reducing the pool of lipid carrier available.</text>
</comment>
<comment type="similarity">
    <text evidence="1">Belongs to the UppP family.</text>
</comment>
<evidence type="ECO:0000255" key="1">
    <source>
        <dbReference type="HAMAP-Rule" id="MF_01006"/>
    </source>
</evidence>